<accession>Q9LST6</accession>
<accession>Q10ER6</accession>
<accession>Q851D9</accession>
<feature type="chain" id="PRO_0000148051" description="Proteasome subunit beta type-2">
    <location>
        <begin position="1"/>
        <end position="212"/>
    </location>
</feature>
<feature type="sequence conflict" description="In Ref. 1; BAA96837." evidence="3" ref="1">
    <original>F</original>
    <variation>I</variation>
    <location>
        <position position="12"/>
    </location>
</feature>
<protein>
    <recommendedName>
        <fullName>Proteasome subunit beta type-2</fullName>
    </recommendedName>
    <alternativeName>
        <fullName>20S proteasome alpha subunit D</fullName>
    </alternativeName>
    <alternativeName>
        <fullName>20S proteasome subunit beta-4</fullName>
    </alternativeName>
</protein>
<name>PSB2_ORYSJ</name>
<gene>
    <name type="primary">PBD1</name>
    <name type="ordered locus">Os03g0695600</name>
    <name type="ordered locus">LOC_Os03g48930</name>
    <name evidence="4" type="ORF">OsJ_12208</name>
    <name type="ORF">OSJNBb0021P10.3</name>
</gene>
<proteinExistence type="evidence at transcript level"/>
<keyword id="KW-0963">Cytoplasm</keyword>
<keyword id="KW-0539">Nucleus</keyword>
<keyword id="KW-0647">Proteasome</keyword>
<keyword id="KW-1185">Reference proteome</keyword>
<reference key="1">
    <citation type="journal article" date="2000" name="Gene">
        <title>Primary structural features of the 20S proteasome subunits of rice (Oryza sativa).</title>
        <authorList>
            <person name="Sassa H."/>
            <person name="Oguchi S."/>
            <person name="Inoue T."/>
            <person name="Hirano H."/>
        </authorList>
    </citation>
    <scope>NUCLEOTIDE SEQUENCE [MRNA]</scope>
    <source>
        <strain>cv. Nipponbare</strain>
    </source>
</reference>
<reference key="2">
    <citation type="journal article" date="2005" name="Genome Res.">
        <title>Sequence, annotation, and analysis of synteny between rice chromosome 3 and diverged grass species.</title>
        <authorList>
            <consortium name="The rice chromosome 3 sequencing consortium"/>
            <person name="Buell C.R."/>
            <person name="Yuan Q."/>
            <person name="Ouyang S."/>
            <person name="Liu J."/>
            <person name="Zhu W."/>
            <person name="Wang A."/>
            <person name="Maiti R."/>
            <person name="Haas B."/>
            <person name="Wortman J."/>
            <person name="Pertea M."/>
            <person name="Jones K.M."/>
            <person name="Kim M."/>
            <person name="Overton L."/>
            <person name="Tsitrin T."/>
            <person name="Fadrosh D."/>
            <person name="Bera J."/>
            <person name="Weaver B."/>
            <person name="Jin S."/>
            <person name="Johri S."/>
            <person name="Reardon M."/>
            <person name="Webb K."/>
            <person name="Hill J."/>
            <person name="Moffat K."/>
            <person name="Tallon L."/>
            <person name="Van Aken S."/>
            <person name="Lewis M."/>
            <person name="Utterback T."/>
            <person name="Feldblyum T."/>
            <person name="Zismann V."/>
            <person name="Iobst S."/>
            <person name="Hsiao J."/>
            <person name="de Vazeille A.R."/>
            <person name="Salzberg S.L."/>
            <person name="White O."/>
            <person name="Fraser C.M."/>
            <person name="Yu Y."/>
            <person name="Kim H."/>
            <person name="Rambo T."/>
            <person name="Currie J."/>
            <person name="Collura K."/>
            <person name="Kernodle-Thompson S."/>
            <person name="Wei F."/>
            <person name="Kudrna K."/>
            <person name="Ammiraju J.S.S."/>
            <person name="Luo M."/>
            <person name="Goicoechea J.L."/>
            <person name="Wing R.A."/>
            <person name="Henry D."/>
            <person name="Oates R."/>
            <person name="Palmer M."/>
            <person name="Pries G."/>
            <person name="Saski C."/>
            <person name="Simmons J."/>
            <person name="Soderlund C."/>
            <person name="Nelson W."/>
            <person name="de la Bastide M."/>
            <person name="Spiegel L."/>
            <person name="Nascimento L."/>
            <person name="Huang E."/>
            <person name="Preston R."/>
            <person name="Zutavern T."/>
            <person name="Palmer L."/>
            <person name="O'Shaughnessy A."/>
            <person name="Dike S."/>
            <person name="McCombie W.R."/>
            <person name="Minx P."/>
            <person name="Cordum H."/>
            <person name="Wilson R."/>
            <person name="Jin W."/>
            <person name="Lee H.R."/>
            <person name="Jiang J."/>
            <person name="Jackson S."/>
        </authorList>
    </citation>
    <scope>NUCLEOTIDE SEQUENCE [LARGE SCALE GENOMIC DNA]</scope>
    <source>
        <strain>cv. Nipponbare</strain>
    </source>
</reference>
<reference key="3">
    <citation type="journal article" date="2005" name="Nature">
        <title>The map-based sequence of the rice genome.</title>
        <authorList>
            <consortium name="International rice genome sequencing project (IRGSP)"/>
        </authorList>
    </citation>
    <scope>NUCLEOTIDE SEQUENCE [LARGE SCALE GENOMIC DNA]</scope>
    <source>
        <strain>cv. Nipponbare</strain>
    </source>
</reference>
<reference key="4">
    <citation type="journal article" date="2008" name="Nucleic Acids Res.">
        <title>The rice annotation project database (RAP-DB): 2008 update.</title>
        <authorList>
            <consortium name="The rice annotation project (RAP)"/>
        </authorList>
    </citation>
    <scope>GENOME REANNOTATION</scope>
    <source>
        <strain>cv. Nipponbare</strain>
    </source>
</reference>
<reference key="5">
    <citation type="journal article" date="2013" name="Rice">
        <title>Improvement of the Oryza sativa Nipponbare reference genome using next generation sequence and optical map data.</title>
        <authorList>
            <person name="Kawahara Y."/>
            <person name="de la Bastide M."/>
            <person name="Hamilton J.P."/>
            <person name="Kanamori H."/>
            <person name="McCombie W.R."/>
            <person name="Ouyang S."/>
            <person name="Schwartz D.C."/>
            <person name="Tanaka T."/>
            <person name="Wu J."/>
            <person name="Zhou S."/>
            <person name="Childs K.L."/>
            <person name="Davidson R.M."/>
            <person name="Lin H."/>
            <person name="Quesada-Ocampo L."/>
            <person name="Vaillancourt B."/>
            <person name="Sakai H."/>
            <person name="Lee S.S."/>
            <person name="Kim J."/>
            <person name="Numa H."/>
            <person name="Itoh T."/>
            <person name="Buell C.R."/>
            <person name="Matsumoto T."/>
        </authorList>
    </citation>
    <scope>GENOME REANNOTATION</scope>
    <source>
        <strain>cv. Nipponbare</strain>
    </source>
</reference>
<reference key="6">
    <citation type="journal article" date="2005" name="PLoS Biol.">
        <title>The genomes of Oryza sativa: a history of duplications.</title>
        <authorList>
            <person name="Yu J."/>
            <person name="Wang J."/>
            <person name="Lin W."/>
            <person name="Li S."/>
            <person name="Li H."/>
            <person name="Zhou J."/>
            <person name="Ni P."/>
            <person name="Dong W."/>
            <person name="Hu S."/>
            <person name="Zeng C."/>
            <person name="Zhang J."/>
            <person name="Zhang Y."/>
            <person name="Li R."/>
            <person name="Xu Z."/>
            <person name="Li S."/>
            <person name="Li X."/>
            <person name="Zheng H."/>
            <person name="Cong L."/>
            <person name="Lin L."/>
            <person name="Yin J."/>
            <person name="Geng J."/>
            <person name="Li G."/>
            <person name="Shi J."/>
            <person name="Liu J."/>
            <person name="Lv H."/>
            <person name="Li J."/>
            <person name="Wang J."/>
            <person name="Deng Y."/>
            <person name="Ran L."/>
            <person name="Shi X."/>
            <person name="Wang X."/>
            <person name="Wu Q."/>
            <person name="Li C."/>
            <person name="Ren X."/>
            <person name="Wang J."/>
            <person name="Wang X."/>
            <person name="Li D."/>
            <person name="Liu D."/>
            <person name="Zhang X."/>
            <person name="Ji Z."/>
            <person name="Zhao W."/>
            <person name="Sun Y."/>
            <person name="Zhang Z."/>
            <person name="Bao J."/>
            <person name="Han Y."/>
            <person name="Dong L."/>
            <person name="Ji J."/>
            <person name="Chen P."/>
            <person name="Wu S."/>
            <person name="Liu J."/>
            <person name="Xiao Y."/>
            <person name="Bu D."/>
            <person name="Tan J."/>
            <person name="Yang L."/>
            <person name="Ye C."/>
            <person name="Zhang J."/>
            <person name="Xu J."/>
            <person name="Zhou Y."/>
            <person name="Yu Y."/>
            <person name="Zhang B."/>
            <person name="Zhuang S."/>
            <person name="Wei H."/>
            <person name="Liu B."/>
            <person name="Lei M."/>
            <person name="Yu H."/>
            <person name="Li Y."/>
            <person name="Xu H."/>
            <person name="Wei S."/>
            <person name="He X."/>
            <person name="Fang L."/>
            <person name="Zhang Z."/>
            <person name="Zhang Y."/>
            <person name="Huang X."/>
            <person name="Su Z."/>
            <person name="Tong W."/>
            <person name="Li J."/>
            <person name="Tong Z."/>
            <person name="Li S."/>
            <person name="Ye J."/>
            <person name="Wang L."/>
            <person name="Fang L."/>
            <person name="Lei T."/>
            <person name="Chen C.-S."/>
            <person name="Chen H.-C."/>
            <person name="Xu Z."/>
            <person name="Li H."/>
            <person name="Huang H."/>
            <person name="Zhang F."/>
            <person name="Xu H."/>
            <person name="Li N."/>
            <person name="Zhao C."/>
            <person name="Li S."/>
            <person name="Dong L."/>
            <person name="Huang Y."/>
            <person name="Li L."/>
            <person name="Xi Y."/>
            <person name="Qi Q."/>
            <person name="Li W."/>
            <person name="Zhang B."/>
            <person name="Hu W."/>
            <person name="Zhang Y."/>
            <person name="Tian X."/>
            <person name="Jiao Y."/>
            <person name="Liang X."/>
            <person name="Jin J."/>
            <person name="Gao L."/>
            <person name="Zheng W."/>
            <person name="Hao B."/>
            <person name="Liu S.-M."/>
            <person name="Wang W."/>
            <person name="Yuan L."/>
            <person name="Cao M."/>
            <person name="McDermott J."/>
            <person name="Samudrala R."/>
            <person name="Wang J."/>
            <person name="Wong G.K.-S."/>
            <person name="Yang H."/>
        </authorList>
    </citation>
    <scope>NUCLEOTIDE SEQUENCE [LARGE SCALE GENOMIC DNA]</scope>
    <source>
        <strain>cv. Nipponbare</strain>
    </source>
</reference>
<reference key="7">
    <citation type="journal article" date="2003" name="Science">
        <title>Collection, mapping, and annotation of over 28,000 cDNA clones from japonica rice.</title>
        <authorList>
            <consortium name="The rice full-length cDNA consortium"/>
        </authorList>
    </citation>
    <scope>NUCLEOTIDE SEQUENCE [LARGE SCALE MRNA]</scope>
    <source>
        <strain>cv. Nipponbare</strain>
    </source>
</reference>
<evidence type="ECO:0000250" key="1"/>
<evidence type="ECO:0000255" key="2">
    <source>
        <dbReference type="PROSITE-ProRule" id="PRU00809"/>
    </source>
</evidence>
<evidence type="ECO:0000305" key="3"/>
<evidence type="ECO:0000312" key="4">
    <source>
        <dbReference type="EMBL" id="EAZ28234.1"/>
    </source>
</evidence>
<organism>
    <name type="scientific">Oryza sativa subsp. japonica</name>
    <name type="common">Rice</name>
    <dbReference type="NCBI Taxonomy" id="39947"/>
    <lineage>
        <taxon>Eukaryota</taxon>
        <taxon>Viridiplantae</taxon>
        <taxon>Streptophyta</taxon>
        <taxon>Embryophyta</taxon>
        <taxon>Tracheophyta</taxon>
        <taxon>Spermatophyta</taxon>
        <taxon>Magnoliopsida</taxon>
        <taxon>Liliopsida</taxon>
        <taxon>Poales</taxon>
        <taxon>Poaceae</taxon>
        <taxon>BOP clade</taxon>
        <taxon>Oryzoideae</taxon>
        <taxon>Oryzeae</taxon>
        <taxon>Oryzinae</taxon>
        <taxon>Oryza</taxon>
        <taxon>Oryza sativa</taxon>
    </lineage>
</organism>
<comment type="function">
    <text evidence="1">Non-catalytic component of the proteasome, a multicatalytic proteinase complex which is characterized by its ability to cleave peptides with Arg, Phe, Tyr, Leu, and Glu adjacent to the leaving group at neutral or slightly basic pH. The proteasome has an ATP-dependent proteolytic activity (By similarity).</text>
</comment>
<comment type="subunit">
    <text evidence="1">The 26S proteasome consists of a 20S proteasome core and two 19S regulatory subunits. The 20S proteasome core is composed of 28 subunits that are arranged in four stacked rings, resulting in a barrel-shaped structure. The two end rings are each formed by seven alpha subunits, and the two central rings are each formed by seven beta subunits. The catalytic chamber with the active sites is on the inside of the barrel (By similarity).</text>
</comment>
<comment type="subcellular location">
    <subcellularLocation>
        <location evidence="2">Cytoplasm</location>
    </subcellularLocation>
    <subcellularLocation>
        <location evidence="1">Nucleus</location>
    </subcellularLocation>
</comment>
<comment type="similarity">
    <text evidence="2">Belongs to the peptidase T1B family.</text>
</comment>
<sequence>MECVIGVVGRDFAVVAADTSAVQSILVHKTDEDKVMVLDSHKLMGASGEPGDRVQFTEFIQKNLHLYQFRNNIPLSTAATANFTRGELATALRKNPYYVNVLLAGYDSDVGASLYYIDYIATFHKIEKGAFGYGSYFCLSLMDKLYRPDMSVEEAVDLVDKCIKEIRLRLVVAPQNFIIKIVDKEGAREYARRAYTDSPPEAATSEAATVAA</sequence>
<dbReference type="EMBL" id="AB026566">
    <property type="protein sequence ID" value="BAA96837.1"/>
    <property type="molecule type" value="mRNA"/>
</dbReference>
<dbReference type="EMBL" id="AC123974">
    <property type="protein sequence ID" value="AAO19369.1"/>
    <property type="molecule type" value="Genomic_DNA"/>
</dbReference>
<dbReference type="EMBL" id="DP000009">
    <property type="protein sequence ID" value="ABF98343.1"/>
    <property type="molecule type" value="Genomic_DNA"/>
</dbReference>
<dbReference type="EMBL" id="AP008209">
    <property type="protein sequence ID" value="BAF12890.1"/>
    <property type="molecule type" value="Genomic_DNA"/>
</dbReference>
<dbReference type="EMBL" id="AP014959">
    <property type="protein sequence ID" value="BAS85882.1"/>
    <property type="molecule type" value="Genomic_DNA"/>
</dbReference>
<dbReference type="EMBL" id="CM000140">
    <property type="protein sequence ID" value="EAZ28234.1"/>
    <property type="molecule type" value="Genomic_DNA"/>
</dbReference>
<dbReference type="EMBL" id="AK061228">
    <property type="protein sequence ID" value="BAG87805.1"/>
    <property type="molecule type" value="mRNA"/>
</dbReference>
<dbReference type="EMBL" id="AK099128">
    <property type="protein sequence ID" value="BAG93942.1"/>
    <property type="molecule type" value="mRNA"/>
</dbReference>
<dbReference type="RefSeq" id="XP_015632007.1">
    <property type="nucleotide sequence ID" value="XM_015776521.1"/>
</dbReference>
<dbReference type="SMR" id="Q9LST6"/>
<dbReference type="FunCoup" id="Q9LST6">
    <property type="interactions" value="3116"/>
</dbReference>
<dbReference type="STRING" id="39947.Q9LST6"/>
<dbReference type="MEROPS" id="T01.984"/>
<dbReference type="PaxDb" id="39947-Q9LST6"/>
<dbReference type="EnsemblPlants" id="Os03t0695600-01">
    <property type="protein sequence ID" value="Os03t0695600-01"/>
    <property type="gene ID" value="Os03g0695600"/>
</dbReference>
<dbReference type="EnsemblPlants" id="Os03t0695600-03">
    <property type="protein sequence ID" value="Os03t0695600-03"/>
    <property type="gene ID" value="Os03g0695600"/>
</dbReference>
<dbReference type="Gramene" id="Os03t0695600-01">
    <property type="protein sequence ID" value="Os03t0695600-01"/>
    <property type="gene ID" value="Os03g0695600"/>
</dbReference>
<dbReference type="Gramene" id="Os03t0695600-03">
    <property type="protein sequence ID" value="Os03t0695600-03"/>
    <property type="gene ID" value="Os03g0695600"/>
</dbReference>
<dbReference type="KEGG" id="dosa:Os03g0695600"/>
<dbReference type="eggNOG" id="KOG0177">
    <property type="taxonomic scope" value="Eukaryota"/>
</dbReference>
<dbReference type="HOGENOM" id="CLU_035750_12_1_1"/>
<dbReference type="InParanoid" id="Q9LST6"/>
<dbReference type="OMA" id="MKRDHDK"/>
<dbReference type="OrthoDB" id="268428at2759"/>
<dbReference type="Proteomes" id="UP000000763">
    <property type="component" value="Chromosome 3"/>
</dbReference>
<dbReference type="Proteomes" id="UP000007752">
    <property type="component" value="Chromosome 3"/>
</dbReference>
<dbReference type="Proteomes" id="UP000059680">
    <property type="component" value="Chromosome 3"/>
</dbReference>
<dbReference type="ExpressionAtlas" id="Q9LST6">
    <property type="expression patterns" value="baseline and differential"/>
</dbReference>
<dbReference type="GO" id="GO:0005829">
    <property type="term" value="C:cytosol"/>
    <property type="evidence" value="ECO:0000318"/>
    <property type="project" value="GO_Central"/>
</dbReference>
<dbReference type="GO" id="GO:0005634">
    <property type="term" value="C:nucleus"/>
    <property type="evidence" value="ECO:0000318"/>
    <property type="project" value="GO_Central"/>
</dbReference>
<dbReference type="GO" id="GO:0019774">
    <property type="term" value="C:proteasome core complex, beta-subunit complex"/>
    <property type="evidence" value="ECO:0000250"/>
    <property type="project" value="UniProtKB"/>
</dbReference>
<dbReference type="GO" id="GO:0043161">
    <property type="term" value="P:proteasome-mediated ubiquitin-dependent protein catabolic process"/>
    <property type="evidence" value="ECO:0000318"/>
    <property type="project" value="GO_Central"/>
</dbReference>
<dbReference type="CDD" id="cd03758">
    <property type="entry name" value="proteasome_beta_type_2"/>
    <property type="match status" value="1"/>
</dbReference>
<dbReference type="FunFam" id="3.60.20.10:FF:000008">
    <property type="entry name" value="Proteasome subunit beta type-4"/>
    <property type="match status" value="1"/>
</dbReference>
<dbReference type="Gene3D" id="3.60.20.10">
    <property type="entry name" value="Glutamine Phosphoribosylpyrophosphate, subunit 1, domain 1"/>
    <property type="match status" value="1"/>
</dbReference>
<dbReference type="InterPro" id="IPR029055">
    <property type="entry name" value="Ntn_hydrolases_N"/>
</dbReference>
<dbReference type="InterPro" id="IPR050115">
    <property type="entry name" value="Proteasome_alpha"/>
</dbReference>
<dbReference type="InterPro" id="IPR035206">
    <property type="entry name" value="Proteasome_beta2"/>
</dbReference>
<dbReference type="InterPro" id="IPR016050">
    <property type="entry name" value="Proteasome_bsu_CS"/>
</dbReference>
<dbReference type="InterPro" id="IPR001353">
    <property type="entry name" value="Proteasome_sua/b"/>
</dbReference>
<dbReference type="InterPro" id="IPR023333">
    <property type="entry name" value="Proteasome_suB-type"/>
</dbReference>
<dbReference type="PANTHER" id="PTHR11599">
    <property type="entry name" value="PROTEASOME SUBUNIT ALPHA/BETA"/>
    <property type="match status" value="1"/>
</dbReference>
<dbReference type="Pfam" id="PF00227">
    <property type="entry name" value="Proteasome"/>
    <property type="match status" value="1"/>
</dbReference>
<dbReference type="SUPFAM" id="SSF56235">
    <property type="entry name" value="N-terminal nucleophile aminohydrolases (Ntn hydrolases)"/>
    <property type="match status" value="1"/>
</dbReference>
<dbReference type="PROSITE" id="PS00854">
    <property type="entry name" value="PROTEASOME_BETA_1"/>
    <property type="match status" value="1"/>
</dbReference>
<dbReference type="PROSITE" id="PS51476">
    <property type="entry name" value="PROTEASOME_BETA_2"/>
    <property type="match status" value="1"/>
</dbReference>